<protein>
    <recommendedName>
        <fullName evidence="1">Deoxyribose-phosphate aldolase</fullName>
        <shortName evidence="1">DERA</shortName>
        <ecNumber evidence="1">4.1.2.4</ecNumber>
    </recommendedName>
    <alternativeName>
        <fullName evidence="1">2-deoxy-D-ribose 5-phosphate aldolase</fullName>
    </alternativeName>
    <alternativeName>
        <fullName evidence="1">Phosphodeoxyriboaldolase</fullName>
        <shortName evidence="1">Deoxyriboaldolase</shortName>
    </alternativeName>
</protein>
<sequence>MEIKLNKYIDHTLLKPEATKQDIINLCNQAIQYDFATVCVNTCWTSLCKELLKNSNVGITNVVGFPLGACLTEVKVFETKKAIENGCDEIDMVLNIGALKDKDYDLVLNDMKEVKKAANEHVVKVILENCLLTKQEIIKACELAVQAGLEFVKTSTGFNKSGANVKDVKLMSEVVKTKLKLKLLVELELMMMQSQW</sequence>
<gene>
    <name evidence="1" type="primary">deoC</name>
    <name type="ordered locus">MSC_0828</name>
</gene>
<evidence type="ECO:0000255" key="1">
    <source>
        <dbReference type="HAMAP-Rule" id="MF_00114"/>
    </source>
</evidence>
<name>DEOC_MYCMS</name>
<proteinExistence type="inferred from homology"/>
<organism>
    <name type="scientific">Mycoplasma mycoides subsp. mycoides SC (strain CCUG 32753 / NCTC 10114 / PG1)</name>
    <dbReference type="NCBI Taxonomy" id="272632"/>
    <lineage>
        <taxon>Bacteria</taxon>
        <taxon>Bacillati</taxon>
        <taxon>Mycoplasmatota</taxon>
        <taxon>Mollicutes</taxon>
        <taxon>Mycoplasmataceae</taxon>
        <taxon>Mycoplasma</taxon>
    </lineage>
</organism>
<keyword id="KW-0963">Cytoplasm</keyword>
<keyword id="KW-0456">Lyase</keyword>
<keyword id="KW-1185">Reference proteome</keyword>
<keyword id="KW-0704">Schiff base</keyword>
<comment type="function">
    <text evidence="1">Catalyzes a reversible aldol reaction between acetaldehyde and D-glyceraldehyde 3-phosphate to generate 2-deoxy-D-ribose 5-phosphate.</text>
</comment>
<comment type="catalytic activity">
    <reaction evidence="1">
        <text>2-deoxy-D-ribose 5-phosphate = D-glyceraldehyde 3-phosphate + acetaldehyde</text>
        <dbReference type="Rhea" id="RHEA:12821"/>
        <dbReference type="ChEBI" id="CHEBI:15343"/>
        <dbReference type="ChEBI" id="CHEBI:59776"/>
        <dbReference type="ChEBI" id="CHEBI:62877"/>
        <dbReference type="EC" id="4.1.2.4"/>
    </reaction>
</comment>
<comment type="pathway">
    <text evidence="1">Carbohydrate degradation; 2-deoxy-D-ribose 1-phosphate degradation; D-glyceraldehyde 3-phosphate and acetaldehyde from 2-deoxy-alpha-D-ribose 1-phosphate: step 2/2.</text>
</comment>
<comment type="subcellular location">
    <subcellularLocation>
        <location evidence="1">Cytoplasm</location>
    </subcellularLocation>
</comment>
<comment type="similarity">
    <text evidence="1">Belongs to the DeoC/FbaB aldolase family. DeoC type 1 subfamily.</text>
</comment>
<feature type="chain" id="PRO_0000231555" description="Deoxyribose-phosphate aldolase">
    <location>
        <begin position="1"/>
        <end position="196"/>
    </location>
</feature>
<feature type="active site" description="Proton donor/acceptor" evidence="1">
    <location>
        <position position="91"/>
    </location>
</feature>
<feature type="active site" description="Schiff-base intermediate with acetaldehyde" evidence="1">
    <location>
        <position position="153"/>
    </location>
</feature>
<feature type="active site" description="Proton donor/acceptor" evidence="1">
    <location>
        <position position="182"/>
    </location>
</feature>
<accession>Q6MSE7</accession>
<dbReference type="EC" id="4.1.2.4" evidence="1"/>
<dbReference type="EMBL" id="BX293980">
    <property type="protein sequence ID" value="CAE77443.1"/>
    <property type="molecule type" value="Genomic_DNA"/>
</dbReference>
<dbReference type="RefSeq" id="NP_975801.1">
    <property type="nucleotide sequence ID" value="NC_005364.2"/>
</dbReference>
<dbReference type="SMR" id="Q6MSE7"/>
<dbReference type="STRING" id="272632.MSC_0828"/>
<dbReference type="KEGG" id="mmy:MSC_0828"/>
<dbReference type="PATRIC" id="fig|272632.4.peg.891"/>
<dbReference type="eggNOG" id="COG0274">
    <property type="taxonomic scope" value="Bacteria"/>
</dbReference>
<dbReference type="HOGENOM" id="CLU_053595_0_2_14"/>
<dbReference type="UniPathway" id="UPA00002">
    <property type="reaction ID" value="UER00468"/>
</dbReference>
<dbReference type="Proteomes" id="UP000001016">
    <property type="component" value="Chromosome"/>
</dbReference>
<dbReference type="GO" id="GO:0005737">
    <property type="term" value="C:cytoplasm"/>
    <property type="evidence" value="ECO:0007669"/>
    <property type="project" value="UniProtKB-SubCell"/>
</dbReference>
<dbReference type="GO" id="GO:0004139">
    <property type="term" value="F:deoxyribose-phosphate aldolase activity"/>
    <property type="evidence" value="ECO:0007669"/>
    <property type="project" value="UniProtKB-UniRule"/>
</dbReference>
<dbReference type="GO" id="GO:0006018">
    <property type="term" value="P:2-deoxyribose 1-phosphate catabolic process"/>
    <property type="evidence" value="ECO:0007669"/>
    <property type="project" value="UniProtKB-UniRule"/>
</dbReference>
<dbReference type="GO" id="GO:0016052">
    <property type="term" value="P:carbohydrate catabolic process"/>
    <property type="evidence" value="ECO:0007669"/>
    <property type="project" value="TreeGrafter"/>
</dbReference>
<dbReference type="GO" id="GO:0009264">
    <property type="term" value="P:deoxyribonucleotide catabolic process"/>
    <property type="evidence" value="ECO:0007669"/>
    <property type="project" value="InterPro"/>
</dbReference>
<dbReference type="CDD" id="cd00959">
    <property type="entry name" value="DeoC"/>
    <property type="match status" value="1"/>
</dbReference>
<dbReference type="FunFam" id="3.20.20.70:FF:000044">
    <property type="entry name" value="Deoxyribose-phosphate aldolase"/>
    <property type="match status" value="1"/>
</dbReference>
<dbReference type="Gene3D" id="3.20.20.70">
    <property type="entry name" value="Aldolase class I"/>
    <property type="match status" value="1"/>
</dbReference>
<dbReference type="HAMAP" id="MF_00114">
    <property type="entry name" value="DeoC_type1"/>
    <property type="match status" value="1"/>
</dbReference>
<dbReference type="InterPro" id="IPR013785">
    <property type="entry name" value="Aldolase_TIM"/>
</dbReference>
<dbReference type="InterPro" id="IPR011343">
    <property type="entry name" value="DeoC"/>
</dbReference>
<dbReference type="InterPro" id="IPR002915">
    <property type="entry name" value="DeoC/FbaB/LacD_aldolase"/>
</dbReference>
<dbReference type="InterPro" id="IPR028581">
    <property type="entry name" value="DeoC_typeI"/>
</dbReference>
<dbReference type="NCBIfam" id="TIGR00126">
    <property type="entry name" value="deoC"/>
    <property type="match status" value="1"/>
</dbReference>
<dbReference type="PANTHER" id="PTHR10889">
    <property type="entry name" value="DEOXYRIBOSE-PHOSPHATE ALDOLASE"/>
    <property type="match status" value="1"/>
</dbReference>
<dbReference type="PANTHER" id="PTHR10889:SF1">
    <property type="entry name" value="DEOXYRIBOSE-PHOSPHATE ALDOLASE"/>
    <property type="match status" value="1"/>
</dbReference>
<dbReference type="Pfam" id="PF01791">
    <property type="entry name" value="DeoC"/>
    <property type="match status" value="1"/>
</dbReference>
<dbReference type="PIRSF" id="PIRSF001357">
    <property type="entry name" value="DeoC"/>
    <property type="match status" value="1"/>
</dbReference>
<dbReference type="SMART" id="SM01133">
    <property type="entry name" value="DeoC"/>
    <property type="match status" value="1"/>
</dbReference>
<dbReference type="SUPFAM" id="SSF51569">
    <property type="entry name" value="Aldolase"/>
    <property type="match status" value="1"/>
</dbReference>
<reference key="1">
    <citation type="journal article" date="2004" name="Genome Res.">
        <title>The genome sequence of Mycoplasma mycoides subsp. mycoides SC type strain PG1T, the causative agent of contagious bovine pleuropneumonia (CBPP).</title>
        <authorList>
            <person name="Westberg J."/>
            <person name="Persson A."/>
            <person name="Holmberg A."/>
            <person name="Goesmann A."/>
            <person name="Lundeberg J."/>
            <person name="Johansson K.-E."/>
            <person name="Pettersson B."/>
            <person name="Uhlen M."/>
        </authorList>
    </citation>
    <scope>NUCLEOTIDE SEQUENCE [LARGE SCALE GENOMIC DNA]</scope>
    <source>
        <strain>CCUG 32753 / NCTC 10114 / PG1</strain>
    </source>
</reference>